<comment type="function">
    <text evidence="1">Transfers and isomerizes the ribose moiety from AdoMet to the 7-aminomethyl group of 7-deazaguanine (preQ1-tRNA) to give epoxyqueuosine (oQ-tRNA).</text>
</comment>
<comment type="catalytic activity">
    <reaction evidence="1">
        <text>7-aminomethyl-7-carbaguanosine(34) in tRNA + S-adenosyl-L-methionine = epoxyqueuosine(34) in tRNA + adenine + L-methionine + 2 H(+)</text>
        <dbReference type="Rhea" id="RHEA:32155"/>
        <dbReference type="Rhea" id="RHEA-COMP:10342"/>
        <dbReference type="Rhea" id="RHEA-COMP:18582"/>
        <dbReference type="ChEBI" id="CHEBI:15378"/>
        <dbReference type="ChEBI" id="CHEBI:16708"/>
        <dbReference type="ChEBI" id="CHEBI:57844"/>
        <dbReference type="ChEBI" id="CHEBI:59789"/>
        <dbReference type="ChEBI" id="CHEBI:82833"/>
        <dbReference type="ChEBI" id="CHEBI:194443"/>
        <dbReference type="EC" id="2.4.99.17"/>
    </reaction>
</comment>
<comment type="pathway">
    <text evidence="1">tRNA modification; tRNA-queuosine biosynthesis.</text>
</comment>
<comment type="subunit">
    <text evidence="1">Monomer.</text>
</comment>
<comment type="subcellular location">
    <subcellularLocation>
        <location evidence="1">Cytoplasm</location>
    </subcellularLocation>
</comment>
<comment type="similarity">
    <text evidence="1">Belongs to the QueA family.</text>
</comment>
<gene>
    <name evidence="1" type="primary">queA</name>
    <name type="ordered locus">BAB1_1116</name>
</gene>
<keyword id="KW-0963">Cytoplasm</keyword>
<keyword id="KW-0671">Queuosine biosynthesis</keyword>
<keyword id="KW-1185">Reference proteome</keyword>
<keyword id="KW-0949">S-adenosyl-L-methionine</keyword>
<keyword id="KW-0808">Transferase</keyword>
<reference key="1">
    <citation type="journal article" date="2005" name="Infect. Immun.">
        <title>Whole-genome analyses of speciation events in pathogenic Brucellae.</title>
        <authorList>
            <person name="Chain P.S."/>
            <person name="Comerci D.J."/>
            <person name="Tolmasky M.E."/>
            <person name="Larimer F.W."/>
            <person name="Malfatti S.A."/>
            <person name="Vergez L.M."/>
            <person name="Aguero F."/>
            <person name="Land M.L."/>
            <person name="Ugalde R.A."/>
            <person name="Garcia E."/>
        </authorList>
    </citation>
    <scope>NUCLEOTIDE SEQUENCE [LARGE SCALE GENOMIC DNA]</scope>
    <source>
        <strain>2308</strain>
    </source>
</reference>
<evidence type="ECO:0000255" key="1">
    <source>
        <dbReference type="HAMAP-Rule" id="MF_00113"/>
    </source>
</evidence>
<organism>
    <name type="scientific">Brucella abortus (strain 2308)</name>
    <dbReference type="NCBI Taxonomy" id="359391"/>
    <lineage>
        <taxon>Bacteria</taxon>
        <taxon>Pseudomonadati</taxon>
        <taxon>Pseudomonadota</taxon>
        <taxon>Alphaproteobacteria</taxon>
        <taxon>Hyphomicrobiales</taxon>
        <taxon>Brucellaceae</taxon>
        <taxon>Brucella/Ochrobactrum group</taxon>
        <taxon>Brucella</taxon>
    </lineage>
</organism>
<dbReference type="EC" id="2.4.99.17" evidence="1"/>
<dbReference type="EMBL" id="AM040264">
    <property type="protein sequence ID" value="CAJ11072.1"/>
    <property type="molecule type" value="Genomic_DNA"/>
</dbReference>
<dbReference type="RefSeq" id="WP_002964220.1">
    <property type="nucleotide sequence ID" value="NZ_KN046823.1"/>
</dbReference>
<dbReference type="SMR" id="Q2YPY7"/>
<dbReference type="STRING" id="359391.BAB1_1116"/>
<dbReference type="GeneID" id="97533650"/>
<dbReference type="KEGG" id="bmf:BAB1_1116"/>
<dbReference type="PATRIC" id="fig|359391.11.peg.17"/>
<dbReference type="HOGENOM" id="CLU_039110_1_1_5"/>
<dbReference type="PhylomeDB" id="Q2YPY7"/>
<dbReference type="UniPathway" id="UPA00392"/>
<dbReference type="Proteomes" id="UP000002719">
    <property type="component" value="Chromosome I"/>
</dbReference>
<dbReference type="GO" id="GO:0005737">
    <property type="term" value="C:cytoplasm"/>
    <property type="evidence" value="ECO:0007669"/>
    <property type="project" value="UniProtKB-SubCell"/>
</dbReference>
<dbReference type="GO" id="GO:0051075">
    <property type="term" value="F:S-adenosylmethionine:tRNA ribosyltransferase-isomerase activity"/>
    <property type="evidence" value="ECO:0007669"/>
    <property type="project" value="UniProtKB-EC"/>
</dbReference>
<dbReference type="GO" id="GO:0008616">
    <property type="term" value="P:queuosine biosynthetic process"/>
    <property type="evidence" value="ECO:0007669"/>
    <property type="project" value="UniProtKB-UniRule"/>
</dbReference>
<dbReference type="GO" id="GO:0002099">
    <property type="term" value="P:tRNA wobble guanine modification"/>
    <property type="evidence" value="ECO:0007669"/>
    <property type="project" value="TreeGrafter"/>
</dbReference>
<dbReference type="FunFam" id="3.40.1780.10:FF:000001">
    <property type="entry name" value="S-adenosylmethionine:tRNA ribosyltransferase-isomerase"/>
    <property type="match status" value="1"/>
</dbReference>
<dbReference type="Gene3D" id="2.40.10.240">
    <property type="entry name" value="QueA-like"/>
    <property type="match status" value="1"/>
</dbReference>
<dbReference type="Gene3D" id="3.40.1780.10">
    <property type="entry name" value="QueA-like"/>
    <property type="match status" value="1"/>
</dbReference>
<dbReference type="HAMAP" id="MF_00113">
    <property type="entry name" value="QueA"/>
    <property type="match status" value="1"/>
</dbReference>
<dbReference type="InterPro" id="IPR003699">
    <property type="entry name" value="QueA"/>
</dbReference>
<dbReference type="InterPro" id="IPR042118">
    <property type="entry name" value="QueA_dom1"/>
</dbReference>
<dbReference type="InterPro" id="IPR042119">
    <property type="entry name" value="QueA_dom2"/>
</dbReference>
<dbReference type="InterPro" id="IPR036100">
    <property type="entry name" value="QueA_sf"/>
</dbReference>
<dbReference type="NCBIfam" id="NF001140">
    <property type="entry name" value="PRK00147.1"/>
    <property type="match status" value="1"/>
</dbReference>
<dbReference type="NCBIfam" id="TIGR00113">
    <property type="entry name" value="queA"/>
    <property type="match status" value="1"/>
</dbReference>
<dbReference type="PANTHER" id="PTHR30307">
    <property type="entry name" value="S-ADENOSYLMETHIONINE:TRNA RIBOSYLTRANSFERASE-ISOMERASE"/>
    <property type="match status" value="1"/>
</dbReference>
<dbReference type="PANTHER" id="PTHR30307:SF0">
    <property type="entry name" value="S-ADENOSYLMETHIONINE:TRNA RIBOSYLTRANSFERASE-ISOMERASE"/>
    <property type="match status" value="1"/>
</dbReference>
<dbReference type="Pfam" id="PF02547">
    <property type="entry name" value="Queuosine_synth"/>
    <property type="match status" value="1"/>
</dbReference>
<dbReference type="SUPFAM" id="SSF111337">
    <property type="entry name" value="QueA-like"/>
    <property type="match status" value="1"/>
</dbReference>
<accession>Q2YPY7</accession>
<sequence>MRVDLFDFDLPEERIALRPVEPRDHAKLLHVRPGEPFEDRHVYDLPDLLQPGDALVFNDTKVIPAQLEGMRERTGNISQVSATLHMRVGPDRWKAFLRPAKRVKEGDRIRFGHSGTSCFLGTLDATVAEKGDSGEALLVFDLSGAVLDEAIAAVGHIPLPPYIASKRPEDERDRKDYQTVYAREEGAVAAPTAGLHFTPDLLEKIKARGIEEHFVTLHVGAGTFLPVKADDTGDHKMHAEIGHVSQRTASALNAVHERGGRIICVGTTSLRLIESATGEDGVVRPWSGATDIFITPGYRFRAVDLLMTNFHLPRSTLFMLVSAFSGLDTMHAAYNYAIADGYRFYSYGDASLLERIDHDRHSA</sequence>
<protein>
    <recommendedName>
        <fullName evidence="1">S-adenosylmethionine:tRNA ribosyltransferase-isomerase</fullName>
        <ecNumber evidence="1">2.4.99.17</ecNumber>
    </recommendedName>
    <alternativeName>
        <fullName evidence="1">Queuosine biosynthesis protein QueA</fullName>
    </alternativeName>
</protein>
<feature type="chain" id="PRO_0000231322" description="S-adenosylmethionine:tRNA ribosyltransferase-isomerase">
    <location>
        <begin position="1"/>
        <end position="363"/>
    </location>
</feature>
<proteinExistence type="inferred from homology"/>
<name>QUEA_BRUA2</name>